<name>FOLD_SACD2</name>
<reference key="1">
    <citation type="journal article" date="2008" name="PLoS Genet.">
        <title>Complete genome sequence of the complex carbohydrate-degrading marine bacterium, Saccharophagus degradans strain 2-40 T.</title>
        <authorList>
            <person name="Weiner R.M."/>
            <person name="Taylor L.E. II"/>
            <person name="Henrissat B."/>
            <person name="Hauser L."/>
            <person name="Land M."/>
            <person name="Coutinho P.M."/>
            <person name="Rancurel C."/>
            <person name="Saunders E.H."/>
            <person name="Longmire A.G."/>
            <person name="Zhang H."/>
            <person name="Bayer E.A."/>
            <person name="Gilbert H.J."/>
            <person name="Larimer F."/>
            <person name="Zhulin I.B."/>
            <person name="Ekborg N.A."/>
            <person name="Lamed R."/>
            <person name="Richardson P.M."/>
            <person name="Borovok I."/>
            <person name="Hutcheson S."/>
        </authorList>
    </citation>
    <scope>NUCLEOTIDE SEQUENCE [LARGE SCALE GENOMIC DNA]</scope>
    <source>
        <strain>2-40 / ATCC 43961 / DSM 17024</strain>
    </source>
</reference>
<accession>Q21JE9</accession>
<organism>
    <name type="scientific">Saccharophagus degradans (strain 2-40 / ATCC 43961 / DSM 17024)</name>
    <dbReference type="NCBI Taxonomy" id="203122"/>
    <lineage>
        <taxon>Bacteria</taxon>
        <taxon>Pseudomonadati</taxon>
        <taxon>Pseudomonadota</taxon>
        <taxon>Gammaproteobacteria</taxon>
        <taxon>Cellvibrionales</taxon>
        <taxon>Cellvibrionaceae</taxon>
        <taxon>Saccharophagus</taxon>
    </lineage>
</organism>
<gene>
    <name evidence="1" type="primary">folD</name>
    <name type="ordered locus">Sde_1920</name>
</gene>
<proteinExistence type="inferred from homology"/>
<dbReference type="EC" id="1.5.1.5" evidence="1"/>
<dbReference type="EC" id="3.5.4.9" evidence="1"/>
<dbReference type="EMBL" id="CP000282">
    <property type="protein sequence ID" value="ABD81180.1"/>
    <property type="molecule type" value="Genomic_DNA"/>
</dbReference>
<dbReference type="RefSeq" id="WP_011468398.1">
    <property type="nucleotide sequence ID" value="NC_007912.1"/>
</dbReference>
<dbReference type="SMR" id="Q21JE9"/>
<dbReference type="STRING" id="203122.Sde_1920"/>
<dbReference type="GeneID" id="98613594"/>
<dbReference type="KEGG" id="sde:Sde_1920"/>
<dbReference type="eggNOG" id="COG0190">
    <property type="taxonomic scope" value="Bacteria"/>
</dbReference>
<dbReference type="HOGENOM" id="CLU_034045_2_1_6"/>
<dbReference type="OrthoDB" id="9803580at2"/>
<dbReference type="UniPathway" id="UPA00193"/>
<dbReference type="Proteomes" id="UP000001947">
    <property type="component" value="Chromosome"/>
</dbReference>
<dbReference type="GO" id="GO:0005829">
    <property type="term" value="C:cytosol"/>
    <property type="evidence" value="ECO:0007669"/>
    <property type="project" value="TreeGrafter"/>
</dbReference>
<dbReference type="GO" id="GO:0004477">
    <property type="term" value="F:methenyltetrahydrofolate cyclohydrolase activity"/>
    <property type="evidence" value="ECO:0007669"/>
    <property type="project" value="UniProtKB-UniRule"/>
</dbReference>
<dbReference type="GO" id="GO:0004488">
    <property type="term" value="F:methylenetetrahydrofolate dehydrogenase (NADP+) activity"/>
    <property type="evidence" value="ECO:0007669"/>
    <property type="project" value="UniProtKB-UniRule"/>
</dbReference>
<dbReference type="GO" id="GO:0000105">
    <property type="term" value="P:L-histidine biosynthetic process"/>
    <property type="evidence" value="ECO:0007669"/>
    <property type="project" value="UniProtKB-KW"/>
</dbReference>
<dbReference type="GO" id="GO:0009086">
    <property type="term" value="P:methionine biosynthetic process"/>
    <property type="evidence" value="ECO:0007669"/>
    <property type="project" value="UniProtKB-KW"/>
</dbReference>
<dbReference type="GO" id="GO:0006164">
    <property type="term" value="P:purine nucleotide biosynthetic process"/>
    <property type="evidence" value="ECO:0007669"/>
    <property type="project" value="UniProtKB-KW"/>
</dbReference>
<dbReference type="GO" id="GO:0035999">
    <property type="term" value="P:tetrahydrofolate interconversion"/>
    <property type="evidence" value="ECO:0007669"/>
    <property type="project" value="UniProtKB-UniRule"/>
</dbReference>
<dbReference type="CDD" id="cd01080">
    <property type="entry name" value="NAD_bind_m-THF_DH_Cyclohyd"/>
    <property type="match status" value="1"/>
</dbReference>
<dbReference type="FunFam" id="3.40.50.720:FF:000094">
    <property type="entry name" value="Bifunctional protein FolD"/>
    <property type="match status" value="1"/>
</dbReference>
<dbReference type="FunFam" id="3.40.50.10860:FF:000005">
    <property type="entry name" value="C-1-tetrahydrofolate synthase, cytoplasmic, putative"/>
    <property type="match status" value="1"/>
</dbReference>
<dbReference type="Gene3D" id="3.40.50.10860">
    <property type="entry name" value="Leucine Dehydrogenase, chain A, domain 1"/>
    <property type="match status" value="1"/>
</dbReference>
<dbReference type="Gene3D" id="3.40.50.720">
    <property type="entry name" value="NAD(P)-binding Rossmann-like Domain"/>
    <property type="match status" value="1"/>
</dbReference>
<dbReference type="HAMAP" id="MF_01576">
    <property type="entry name" value="THF_DHG_CYH"/>
    <property type="match status" value="1"/>
</dbReference>
<dbReference type="InterPro" id="IPR046346">
    <property type="entry name" value="Aminoacid_DH-like_N_sf"/>
</dbReference>
<dbReference type="InterPro" id="IPR036291">
    <property type="entry name" value="NAD(P)-bd_dom_sf"/>
</dbReference>
<dbReference type="InterPro" id="IPR000672">
    <property type="entry name" value="THF_DH/CycHdrlase"/>
</dbReference>
<dbReference type="InterPro" id="IPR020630">
    <property type="entry name" value="THF_DH/CycHdrlase_cat_dom"/>
</dbReference>
<dbReference type="InterPro" id="IPR020867">
    <property type="entry name" value="THF_DH/CycHdrlase_CS"/>
</dbReference>
<dbReference type="InterPro" id="IPR020631">
    <property type="entry name" value="THF_DH/CycHdrlase_NAD-bd_dom"/>
</dbReference>
<dbReference type="NCBIfam" id="NF010788">
    <property type="entry name" value="PRK14192.1"/>
    <property type="match status" value="1"/>
</dbReference>
<dbReference type="PANTHER" id="PTHR48099:SF5">
    <property type="entry name" value="C-1-TETRAHYDROFOLATE SYNTHASE, CYTOPLASMIC"/>
    <property type="match status" value="1"/>
</dbReference>
<dbReference type="PANTHER" id="PTHR48099">
    <property type="entry name" value="C-1-TETRAHYDROFOLATE SYNTHASE, CYTOPLASMIC-RELATED"/>
    <property type="match status" value="1"/>
</dbReference>
<dbReference type="Pfam" id="PF00763">
    <property type="entry name" value="THF_DHG_CYH"/>
    <property type="match status" value="1"/>
</dbReference>
<dbReference type="Pfam" id="PF02882">
    <property type="entry name" value="THF_DHG_CYH_C"/>
    <property type="match status" value="1"/>
</dbReference>
<dbReference type="PRINTS" id="PR00085">
    <property type="entry name" value="THFDHDRGNASE"/>
</dbReference>
<dbReference type="SUPFAM" id="SSF53223">
    <property type="entry name" value="Aminoacid dehydrogenase-like, N-terminal domain"/>
    <property type="match status" value="1"/>
</dbReference>
<dbReference type="SUPFAM" id="SSF51735">
    <property type="entry name" value="NAD(P)-binding Rossmann-fold domains"/>
    <property type="match status" value="1"/>
</dbReference>
<dbReference type="PROSITE" id="PS00767">
    <property type="entry name" value="THF_DHG_CYH_2"/>
    <property type="match status" value="1"/>
</dbReference>
<evidence type="ECO:0000255" key="1">
    <source>
        <dbReference type="HAMAP-Rule" id="MF_01576"/>
    </source>
</evidence>
<sequence length="280" mass="29473">MSALILDGKALAKKTEDELTQCVDKLKASSGHTPILATILVGDDPASATYVKMKGNACSRIGMESLKVEMPTSTTTEQLLAKINELNANPAVHGILLQHPVPEQIDERACFDAIALEKDVDGVTCLGFGRMAMGEEAYGCATPKGIMRLLEAYNIELNGKHAVVVGRSPILGKPMAAMLLNANATVTICHSRTQNLEAHIKQADIVVGAVGKPEFIKAEWIKDGAVVVDAGYHPGGVGDIELAPLADRAAAITPVPGGVGPMTINTLIYQTVDSAQKKLG</sequence>
<comment type="function">
    <text evidence="1">Catalyzes the oxidation of 5,10-methylenetetrahydrofolate to 5,10-methenyltetrahydrofolate and then the hydrolysis of 5,10-methenyltetrahydrofolate to 10-formyltetrahydrofolate.</text>
</comment>
<comment type="catalytic activity">
    <reaction evidence="1">
        <text>(6R)-5,10-methylene-5,6,7,8-tetrahydrofolate + NADP(+) = (6R)-5,10-methenyltetrahydrofolate + NADPH</text>
        <dbReference type="Rhea" id="RHEA:22812"/>
        <dbReference type="ChEBI" id="CHEBI:15636"/>
        <dbReference type="ChEBI" id="CHEBI:57455"/>
        <dbReference type="ChEBI" id="CHEBI:57783"/>
        <dbReference type="ChEBI" id="CHEBI:58349"/>
        <dbReference type="EC" id="1.5.1.5"/>
    </reaction>
</comment>
<comment type="catalytic activity">
    <reaction evidence="1">
        <text>(6R)-5,10-methenyltetrahydrofolate + H2O = (6R)-10-formyltetrahydrofolate + H(+)</text>
        <dbReference type="Rhea" id="RHEA:23700"/>
        <dbReference type="ChEBI" id="CHEBI:15377"/>
        <dbReference type="ChEBI" id="CHEBI:15378"/>
        <dbReference type="ChEBI" id="CHEBI:57455"/>
        <dbReference type="ChEBI" id="CHEBI:195366"/>
        <dbReference type="EC" id="3.5.4.9"/>
    </reaction>
</comment>
<comment type="pathway">
    <text evidence="1">One-carbon metabolism; tetrahydrofolate interconversion.</text>
</comment>
<comment type="subunit">
    <text evidence="1">Homodimer.</text>
</comment>
<comment type="similarity">
    <text evidence="1">Belongs to the tetrahydrofolate dehydrogenase/cyclohydrolase family.</text>
</comment>
<feature type="chain" id="PRO_0000268488" description="Bifunctional protein FolD">
    <location>
        <begin position="1"/>
        <end position="280"/>
    </location>
</feature>
<feature type="binding site" evidence="1">
    <location>
        <begin position="166"/>
        <end position="168"/>
    </location>
    <ligand>
        <name>NADP(+)</name>
        <dbReference type="ChEBI" id="CHEBI:58349"/>
    </ligand>
</feature>
<feature type="binding site" evidence="1">
    <location>
        <position position="191"/>
    </location>
    <ligand>
        <name>NADP(+)</name>
        <dbReference type="ChEBI" id="CHEBI:58349"/>
    </ligand>
</feature>
<keyword id="KW-0028">Amino-acid biosynthesis</keyword>
<keyword id="KW-0368">Histidine biosynthesis</keyword>
<keyword id="KW-0378">Hydrolase</keyword>
<keyword id="KW-0486">Methionine biosynthesis</keyword>
<keyword id="KW-0511">Multifunctional enzyme</keyword>
<keyword id="KW-0521">NADP</keyword>
<keyword id="KW-0554">One-carbon metabolism</keyword>
<keyword id="KW-0560">Oxidoreductase</keyword>
<keyword id="KW-0658">Purine biosynthesis</keyword>
<keyword id="KW-1185">Reference proteome</keyword>
<protein>
    <recommendedName>
        <fullName evidence="1">Bifunctional protein FolD</fullName>
    </recommendedName>
    <domain>
        <recommendedName>
            <fullName evidence="1">Methylenetetrahydrofolate dehydrogenase</fullName>
            <ecNumber evidence="1">1.5.1.5</ecNumber>
        </recommendedName>
    </domain>
    <domain>
        <recommendedName>
            <fullName evidence="1">Methenyltetrahydrofolate cyclohydrolase</fullName>
            <ecNumber evidence="1">3.5.4.9</ecNumber>
        </recommendedName>
    </domain>
</protein>